<gene>
    <name evidence="1" type="primary">tatA</name>
    <name type="ordered locus">Mmc1_1619</name>
</gene>
<proteinExistence type="inferred from homology"/>
<comment type="function">
    <text evidence="1">Part of the twin-arginine translocation (Tat) system that transports large folded proteins containing a characteristic twin-arginine motif in their signal peptide across membranes. TatA could form the protein-conducting channel of the Tat system.</text>
</comment>
<comment type="subunit">
    <text evidence="1">The Tat system comprises two distinct complexes: a TatABC complex, containing multiple copies of TatA, TatB and TatC subunits, and a separate TatA complex, containing only TatA subunits. Substrates initially bind to the TatABC complex, which probably triggers association of the separate TatA complex to form the active translocon.</text>
</comment>
<comment type="subcellular location">
    <subcellularLocation>
        <location evidence="1">Cell inner membrane</location>
        <topology evidence="1">Single-pass membrane protein</topology>
    </subcellularLocation>
</comment>
<comment type="similarity">
    <text evidence="1">Belongs to the TatA/E family.</text>
</comment>
<name>TATA_MAGMM</name>
<dbReference type="EMBL" id="CP000471">
    <property type="protein sequence ID" value="ABK44128.1"/>
    <property type="molecule type" value="Genomic_DNA"/>
</dbReference>
<dbReference type="RefSeq" id="WP_011713276.1">
    <property type="nucleotide sequence ID" value="NC_008576.1"/>
</dbReference>
<dbReference type="SMR" id="A0L835"/>
<dbReference type="STRING" id="156889.Mmc1_1619"/>
<dbReference type="KEGG" id="mgm:Mmc1_1619"/>
<dbReference type="eggNOG" id="COG1826">
    <property type="taxonomic scope" value="Bacteria"/>
</dbReference>
<dbReference type="HOGENOM" id="CLU_086034_5_0_5"/>
<dbReference type="OrthoDB" id="7161179at2"/>
<dbReference type="Proteomes" id="UP000002586">
    <property type="component" value="Chromosome"/>
</dbReference>
<dbReference type="GO" id="GO:0033281">
    <property type="term" value="C:TAT protein transport complex"/>
    <property type="evidence" value="ECO:0007669"/>
    <property type="project" value="UniProtKB-UniRule"/>
</dbReference>
<dbReference type="GO" id="GO:0008320">
    <property type="term" value="F:protein transmembrane transporter activity"/>
    <property type="evidence" value="ECO:0007669"/>
    <property type="project" value="UniProtKB-UniRule"/>
</dbReference>
<dbReference type="GO" id="GO:0043953">
    <property type="term" value="P:protein transport by the Tat complex"/>
    <property type="evidence" value="ECO:0007669"/>
    <property type="project" value="UniProtKB-UniRule"/>
</dbReference>
<dbReference type="Gene3D" id="1.20.5.3310">
    <property type="match status" value="1"/>
</dbReference>
<dbReference type="HAMAP" id="MF_00236">
    <property type="entry name" value="TatA_E"/>
    <property type="match status" value="1"/>
</dbReference>
<dbReference type="InterPro" id="IPR003369">
    <property type="entry name" value="TatA/B/E"/>
</dbReference>
<dbReference type="InterPro" id="IPR006312">
    <property type="entry name" value="TatA/E"/>
</dbReference>
<dbReference type="NCBIfam" id="TIGR01411">
    <property type="entry name" value="tatAE"/>
    <property type="match status" value="1"/>
</dbReference>
<dbReference type="PANTHER" id="PTHR42982">
    <property type="entry name" value="SEC-INDEPENDENT PROTEIN TRANSLOCASE PROTEIN TATA"/>
    <property type="match status" value="1"/>
</dbReference>
<dbReference type="PANTHER" id="PTHR42982:SF1">
    <property type="entry name" value="SEC-INDEPENDENT PROTEIN TRANSLOCASE PROTEIN TATA"/>
    <property type="match status" value="1"/>
</dbReference>
<dbReference type="Pfam" id="PF02416">
    <property type="entry name" value="TatA_B_E"/>
    <property type="match status" value="1"/>
</dbReference>
<dbReference type="PRINTS" id="PR01506">
    <property type="entry name" value="TATBPROTEIN"/>
</dbReference>
<accession>A0L835</accession>
<reference key="1">
    <citation type="journal article" date="2009" name="Appl. Environ. Microbiol.">
        <title>Complete genome sequence of the chemolithoautotrophic marine magnetotactic coccus strain MC-1.</title>
        <authorList>
            <person name="Schubbe S."/>
            <person name="Williams T.J."/>
            <person name="Xie G."/>
            <person name="Kiss H.E."/>
            <person name="Brettin T.S."/>
            <person name="Martinez D."/>
            <person name="Ross C.A."/>
            <person name="Schuler D."/>
            <person name="Cox B.L."/>
            <person name="Nealson K.H."/>
            <person name="Bazylinski D.A."/>
        </authorList>
    </citation>
    <scope>NUCLEOTIDE SEQUENCE [LARGE SCALE GENOMIC DNA]</scope>
    <source>
        <strain>ATCC BAA-1437 / JCM 17883 / MC-1</strain>
    </source>
</reference>
<protein>
    <recommendedName>
        <fullName evidence="1">Sec-independent protein translocase protein TatA</fullName>
    </recommendedName>
</protein>
<sequence>MFGLGTMEMVIILVIVLVIFGAGKLPKVMGDMGRGVKSFKKAMNAEDDAPAEPEVSKPAAAESTEKKDA</sequence>
<organism>
    <name type="scientific">Magnetococcus marinus (strain ATCC BAA-1437 / JCM 17883 / MC-1)</name>
    <dbReference type="NCBI Taxonomy" id="156889"/>
    <lineage>
        <taxon>Bacteria</taxon>
        <taxon>Pseudomonadati</taxon>
        <taxon>Pseudomonadota</taxon>
        <taxon>Alphaproteobacteria</taxon>
        <taxon>Magnetococcales</taxon>
        <taxon>Magnetococcaceae</taxon>
        <taxon>Magnetococcus</taxon>
    </lineage>
</organism>
<feature type="chain" id="PRO_1000044394" description="Sec-independent protein translocase protein TatA">
    <location>
        <begin position="1"/>
        <end position="69"/>
    </location>
</feature>
<feature type="transmembrane region" description="Helical" evidence="1">
    <location>
        <begin position="1"/>
        <end position="21"/>
    </location>
</feature>
<feature type="region of interest" description="Disordered" evidence="2">
    <location>
        <begin position="44"/>
        <end position="69"/>
    </location>
</feature>
<evidence type="ECO:0000255" key="1">
    <source>
        <dbReference type="HAMAP-Rule" id="MF_00236"/>
    </source>
</evidence>
<evidence type="ECO:0000256" key="2">
    <source>
        <dbReference type="SAM" id="MobiDB-lite"/>
    </source>
</evidence>
<keyword id="KW-0997">Cell inner membrane</keyword>
<keyword id="KW-1003">Cell membrane</keyword>
<keyword id="KW-0472">Membrane</keyword>
<keyword id="KW-0653">Protein transport</keyword>
<keyword id="KW-1185">Reference proteome</keyword>
<keyword id="KW-0811">Translocation</keyword>
<keyword id="KW-0812">Transmembrane</keyword>
<keyword id="KW-1133">Transmembrane helix</keyword>
<keyword id="KW-0813">Transport</keyword>